<comment type="function">
    <text evidence="1">One of several proteins that assist in the late maturation steps of the functional core of the 30S ribosomal subunit. Associates with free 30S ribosomal subunits (but not with 30S subunits that are part of 70S ribosomes or polysomes) (PubMed:17996707). Required for efficient processing of 16S rRNA. Probably interacts with the 5'-terminal helix region of 16S rRNA, bringing together different domains of the 30S ribosomal subunit which aids assembly (PubMed:17996707).</text>
</comment>
<comment type="subunit">
    <text evidence="1">Interacts with the 30S ribosomal subunit as a monomer, binding in a position overlapping the sites of the A and P site tRNAs, and displacing segments of the 16S rRNA. Probably contacts 16S rRNA and ribosomal protein S9 and S13.</text>
</comment>
<comment type="subcellular location">
    <subcellularLocation>
        <location evidence="4">Cytoplasm</location>
    </subcellularLocation>
    <text evidence="1">Binds to the mature 30S ribosomal subunit.</text>
</comment>
<comment type="similarity">
    <text evidence="3">Belongs to the RbfA family.</text>
</comment>
<protein>
    <recommendedName>
        <fullName evidence="2">Ribosome-binding factor A</fullName>
    </recommendedName>
    <alternativeName>
        <fullName>30S ribosome-binding protein</fullName>
    </alternativeName>
</protein>
<name>RBFA_THET8</name>
<proteinExistence type="evidence at protein level"/>
<reference key="1">
    <citation type="submission" date="2004-11" db="EMBL/GenBank/DDBJ databases">
        <title>Complete genome sequence of Thermus thermophilus HB8.</title>
        <authorList>
            <person name="Masui R."/>
            <person name="Kurokawa K."/>
            <person name="Nakagawa N."/>
            <person name="Tokunaga F."/>
            <person name="Koyama Y."/>
            <person name="Shibata T."/>
            <person name="Oshima T."/>
            <person name="Yokoyama S."/>
            <person name="Yasunaga T."/>
            <person name="Kuramitsu S."/>
        </authorList>
    </citation>
    <scope>NUCLEOTIDE SEQUENCE [LARGE SCALE GENOMIC DNA]</scope>
    <source>
        <strain>ATCC 27634 / DSM 579 / HB8</strain>
    </source>
</reference>
<reference evidence="5 6" key="2">
    <citation type="journal article" date="2007" name="Mol. Cell">
        <title>Structural aspects of RbfA action during small ribosomal subunit assembly.</title>
        <authorList>
            <person name="Datta P.P."/>
            <person name="Wilson D.N."/>
            <person name="Kawazoe M."/>
            <person name="Swami N.K."/>
            <person name="Kaminishi T."/>
            <person name="Sharma M.R."/>
            <person name="Booth T.M."/>
            <person name="Takemoto C."/>
            <person name="Fucini P."/>
            <person name="Yokoyama S."/>
            <person name="Agrawal R.K."/>
        </authorList>
    </citation>
    <scope>X-RAY CRYSTALLOGRAPHY (1.84 ANGSTROMS)</scope>
    <scope>STRUCTURE BY ELECTRON MICROSCOPY (12.5 ANGSTROMS) ON THE 30S RIBOSOMAL SUBUNIT</scope>
    <scope>FUNCTION</scope>
    <scope>SUBUNIT</scope>
    <scope>SUBCELLULAR LOCATION</scope>
    <scope>RRNA-BINDING</scope>
    <source>
        <strain>ATCC 27634 / DSM 579 / HB8</strain>
    </source>
</reference>
<gene>
    <name evidence="2" type="primary">rbfA</name>
    <name type="ordered locus">TTHA0907</name>
</gene>
<feature type="chain" id="PRO_0000438983" description="Ribosome-binding factor A">
    <location>
        <begin position="1"/>
        <end position="95"/>
    </location>
</feature>
<feature type="helix" evidence="7">
    <location>
        <begin position="5"/>
        <end position="21"/>
    </location>
</feature>
<feature type="helix" evidence="7">
    <location>
        <begin position="26"/>
        <end position="28"/>
    </location>
</feature>
<feature type="strand" evidence="7">
    <location>
        <begin position="32"/>
        <end position="38"/>
    </location>
</feature>
<feature type="strand" evidence="7">
    <location>
        <begin position="42"/>
        <end position="50"/>
    </location>
</feature>
<feature type="helix" evidence="7">
    <location>
        <begin position="55"/>
        <end position="64"/>
    </location>
</feature>
<feature type="helix" evidence="7">
    <location>
        <begin position="66"/>
        <end position="74"/>
    </location>
</feature>
<feature type="strand" evidence="7">
    <location>
        <begin position="84"/>
        <end position="89"/>
    </location>
</feature>
<feature type="helix" evidence="7">
    <location>
        <begin position="90"/>
        <end position="92"/>
    </location>
</feature>
<organism>
    <name type="scientific">Thermus thermophilus (strain ATCC 27634 / DSM 579 / HB8)</name>
    <dbReference type="NCBI Taxonomy" id="300852"/>
    <lineage>
        <taxon>Bacteria</taxon>
        <taxon>Thermotogati</taxon>
        <taxon>Deinococcota</taxon>
        <taxon>Deinococci</taxon>
        <taxon>Thermales</taxon>
        <taxon>Thermaceae</taxon>
        <taxon>Thermus</taxon>
    </lineage>
</organism>
<keyword id="KW-0002">3D-structure</keyword>
<keyword id="KW-0963">Cytoplasm</keyword>
<keyword id="KW-1185">Reference proteome</keyword>
<keyword id="KW-0690">Ribosome biogenesis</keyword>
<keyword id="KW-0694">RNA-binding</keyword>
<keyword id="KW-0699">rRNA-binding</keyword>
<sequence>MAYGKAHLEAQLKRALAEEIQALEDPRLFLLTVEAVRLSKDGSVLSVYVEAFREEEGALRALSRAERRLVAALARRVRMRRLPRLEFLPWRASPA</sequence>
<accession>Q5SJV1</accession>
<dbReference type="EMBL" id="AP008226">
    <property type="protein sequence ID" value="BAD70730.1"/>
    <property type="molecule type" value="Genomic_DNA"/>
</dbReference>
<dbReference type="RefSeq" id="WP_011172996.1">
    <property type="nucleotide sequence ID" value="NC_006461.1"/>
</dbReference>
<dbReference type="RefSeq" id="YP_144173.1">
    <property type="nucleotide sequence ID" value="NC_006461.1"/>
</dbReference>
<dbReference type="PDB" id="2DYJ">
    <property type="method" value="X-ray"/>
    <property type="resolution" value="1.84 A"/>
    <property type="chains" value="A/B=1-95"/>
</dbReference>
<dbReference type="PDB" id="2R1C">
    <property type="method" value="EM"/>
    <property type="resolution" value="12.50 A"/>
    <property type="chains" value="A=1-95"/>
</dbReference>
<dbReference type="PDBsum" id="2DYJ"/>
<dbReference type="PDBsum" id="2R1C"/>
<dbReference type="EMDB" id="EMD-1413"/>
<dbReference type="SMR" id="Q5SJV1"/>
<dbReference type="EnsemblBacteria" id="BAD70730">
    <property type="protein sequence ID" value="BAD70730"/>
    <property type="gene ID" value="BAD70730"/>
</dbReference>
<dbReference type="GeneID" id="3169952"/>
<dbReference type="KEGG" id="ttj:TTHA0907"/>
<dbReference type="PATRIC" id="fig|300852.9.peg.899"/>
<dbReference type="eggNOG" id="COG0858">
    <property type="taxonomic scope" value="Bacteria"/>
</dbReference>
<dbReference type="HOGENOM" id="CLU_089475_6_4_0"/>
<dbReference type="EvolutionaryTrace" id="Q5SJV1"/>
<dbReference type="Proteomes" id="UP000000532">
    <property type="component" value="Chromosome"/>
</dbReference>
<dbReference type="GO" id="GO:0005829">
    <property type="term" value="C:cytosol"/>
    <property type="evidence" value="ECO:0007669"/>
    <property type="project" value="TreeGrafter"/>
</dbReference>
<dbReference type="GO" id="GO:0043024">
    <property type="term" value="F:ribosomal small subunit binding"/>
    <property type="evidence" value="ECO:0007669"/>
    <property type="project" value="TreeGrafter"/>
</dbReference>
<dbReference type="GO" id="GO:0019843">
    <property type="term" value="F:rRNA binding"/>
    <property type="evidence" value="ECO:0007669"/>
    <property type="project" value="UniProtKB-KW"/>
</dbReference>
<dbReference type="GO" id="GO:0030490">
    <property type="term" value="P:maturation of SSU-rRNA"/>
    <property type="evidence" value="ECO:0007669"/>
    <property type="project" value="UniProtKB-UniRule"/>
</dbReference>
<dbReference type="Gene3D" id="3.30.300.20">
    <property type="match status" value="1"/>
</dbReference>
<dbReference type="HAMAP" id="MF_00003">
    <property type="entry name" value="RbfA"/>
    <property type="match status" value="1"/>
</dbReference>
<dbReference type="InterPro" id="IPR015946">
    <property type="entry name" value="KH_dom-like_a/b"/>
</dbReference>
<dbReference type="InterPro" id="IPR000238">
    <property type="entry name" value="RbfA"/>
</dbReference>
<dbReference type="InterPro" id="IPR023799">
    <property type="entry name" value="RbfA_dom_sf"/>
</dbReference>
<dbReference type="PANTHER" id="PTHR33515">
    <property type="entry name" value="RIBOSOME-BINDING FACTOR A, CHLOROPLASTIC-RELATED"/>
    <property type="match status" value="1"/>
</dbReference>
<dbReference type="PANTHER" id="PTHR33515:SF1">
    <property type="entry name" value="RIBOSOME-BINDING FACTOR A, CHLOROPLASTIC-RELATED"/>
    <property type="match status" value="1"/>
</dbReference>
<dbReference type="Pfam" id="PF02033">
    <property type="entry name" value="RBFA"/>
    <property type="match status" value="1"/>
</dbReference>
<dbReference type="SUPFAM" id="SSF89919">
    <property type="entry name" value="Ribosome-binding factor A, RbfA"/>
    <property type="match status" value="1"/>
</dbReference>
<evidence type="ECO:0000269" key="1">
    <source>
    </source>
</evidence>
<evidence type="ECO:0000303" key="2">
    <source>
    </source>
</evidence>
<evidence type="ECO:0000305" key="3"/>
<evidence type="ECO:0000305" key="4">
    <source>
    </source>
</evidence>
<evidence type="ECO:0007744" key="5">
    <source>
        <dbReference type="PDB" id="2DYJ"/>
    </source>
</evidence>
<evidence type="ECO:0007744" key="6">
    <source>
        <dbReference type="PDB" id="2R1C"/>
    </source>
</evidence>
<evidence type="ECO:0007829" key="7">
    <source>
        <dbReference type="PDB" id="2DYJ"/>
    </source>
</evidence>